<organism>
    <name type="scientific">Acidiphilium cryptum (strain JF-5)</name>
    <dbReference type="NCBI Taxonomy" id="349163"/>
    <lineage>
        <taxon>Bacteria</taxon>
        <taxon>Pseudomonadati</taxon>
        <taxon>Pseudomonadota</taxon>
        <taxon>Alphaproteobacteria</taxon>
        <taxon>Acetobacterales</taxon>
        <taxon>Acidocellaceae</taxon>
        <taxon>Acidiphilium</taxon>
    </lineage>
</organism>
<sequence>MSAIADITAREILDSRGNPTVEVDVILDSGAMGRAAVPSGASTGAHEAVELRDGEPARFGGKGVQRAVEAVEGEIFDAIGGMDASEQVAIDETMIDLDGTPNKARLGANAILGVSLAVAKAAADEIGLPLYRYLGGVYARTLPVPMMNIINGGKHADNPIDIQEFMIQPVGAASIAEAVRMGSEVFQALKKILHDAGHNTNVGDEGGFAPGLKSAEEALGFMTRAVEAAGYRAGEDIAFALDCAATEFYKDGRYHLEGEGKVLDAGGMTDYIAALAKSFPIISVEDPLSEDDWEGWAHFTSTLGGAMQVVGDDLFVTNPTRLRRGIAAKSANSILIKVNQIGTLSETLEAVELAQRAGMTAVISHRSGETEDATIADIAVATNAGQIKTGSLARSDRVAKYNQLIRIEAELDIAGRFAGRTILRG</sequence>
<keyword id="KW-0963">Cytoplasm</keyword>
<keyword id="KW-0324">Glycolysis</keyword>
<keyword id="KW-0456">Lyase</keyword>
<keyword id="KW-0460">Magnesium</keyword>
<keyword id="KW-0479">Metal-binding</keyword>
<keyword id="KW-1185">Reference proteome</keyword>
<keyword id="KW-0964">Secreted</keyword>
<evidence type="ECO:0000255" key="1">
    <source>
        <dbReference type="HAMAP-Rule" id="MF_00318"/>
    </source>
</evidence>
<comment type="function">
    <text evidence="1">Catalyzes the reversible conversion of 2-phosphoglycerate (2-PG) into phosphoenolpyruvate (PEP). It is essential for the degradation of carbohydrates via glycolysis.</text>
</comment>
<comment type="catalytic activity">
    <reaction evidence="1">
        <text>(2R)-2-phosphoglycerate = phosphoenolpyruvate + H2O</text>
        <dbReference type="Rhea" id="RHEA:10164"/>
        <dbReference type="ChEBI" id="CHEBI:15377"/>
        <dbReference type="ChEBI" id="CHEBI:58289"/>
        <dbReference type="ChEBI" id="CHEBI:58702"/>
        <dbReference type="EC" id="4.2.1.11"/>
    </reaction>
</comment>
<comment type="cofactor">
    <cofactor evidence="1">
        <name>Mg(2+)</name>
        <dbReference type="ChEBI" id="CHEBI:18420"/>
    </cofactor>
    <text evidence="1">Binds a second Mg(2+) ion via substrate during catalysis.</text>
</comment>
<comment type="pathway">
    <text evidence="1">Carbohydrate degradation; glycolysis; pyruvate from D-glyceraldehyde 3-phosphate: step 4/5.</text>
</comment>
<comment type="subcellular location">
    <subcellularLocation>
        <location evidence="1">Cytoplasm</location>
    </subcellularLocation>
    <subcellularLocation>
        <location evidence="1">Secreted</location>
    </subcellularLocation>
    <subcellularLocation>
        <location evidence="1">Cell surface</location>
    </subcellularLocation>
    <text evidence="1">Fractions of enolase are present in both the cytoplasm and on the cell surface.</text>
</comment>
<comment type="similarity">
    <text evidence="1">Belongs to the enolase family.</text>
</comment>
<gene>
    <name evidence="1" type="primary">eno</name>
    <name type="ordered locus">Acry_0167</name>
</gene>
<name>ENO_ACICJ</name>
<accession>A5FUW3</accession>
<feature type="chain" id="PRO_1000019180" description="Enolase">
    <location>
        <begin position="1"/>
        <end position="425"/>
    </location>
</feature>
<feature type="active site" description="Proton donor" evidence="1">
    <location>
        <position position="205"/>
    </location>
</feature>
<feature type="active site" description="Proton acceptor" evidence="1">
    <location>
        <position position="337"/>
    </location>
</feature>
<feature type="binding site" evidence="1">
    <location>
        <position position="163"/>
    </location>
    <ligand>
        <name>(2R)-2-phosphoglycerate</name>
        <dbReference type="ChEBI" id="CHEBI:58289"/>
    </ligand>
</feature>
<feature type="binding site" evidence="1">
    <location>
        <position position="242"/>
    </location>
    <ligand>
        <name>Mg(2+)</name>
        <dbReference type="ChEBI" id="CHEBI:18420"/>
    </ligand>
</feature>
<feature type="binding site" evidence="1">
    <location>
        <position position="285"/>
    </location>
    <ligand>
        <name>Mg(2+)</name>
        <dbReference type="ChEBI" id="CHEBI:18420"/>
    </ligand>
</feature>
<feature type="binding site" evidence="1">
    <location>
        <position position="312"/>
    </location>
    <ligand>
        <name>Mg(2+)</name>
        <dbReference type="ChEBI" id="CHEBI:18420"/>
    </ligand>
</feature>
<feature type="binding site" evidence="1">
    <location>
        <position position="337"/>
    </location>
    <ligand>
        <name>(2R)-2-phosphoglycerate</name>
        <dbReference type="ChEBI" id="CHEBI:58289"/>
    </ligand>
</feature>
<feature type="binding site" evidence="1">
    <location>
        <position position="366"/>
    </location>
    <ligand>
        <name>(2R)-2-phosphoglycerate</name>
        <dbReference type="ChEBI" id="CHEBI:58289"/>
    </ligand>
</feature>
<feature type="binding site" evidence="1">
    <location>
        <position position="367"/>
    </location>
    <ligand>
        <name>(2R)-2-phosphoglycerate</name>
        <dbReference type="ChEBI" id="CHEBI:58289"/>
    </ligand>
</feature>
<feature type="binding site" evidence="1">
    <location>
        <position position="388"/>
    </location>
    <ligand>
        <name>(2R)-2-phosphoglycerate</name>
        <dbReference type="ChEBI" id="CHEBI:58289"/>
    </ligand>
</feature>
<dbReference type="EC" id="4.2.1.11" evidence="1"/>
<dbReference type="EMBL" id="CP000697">
    <property type="protein sequence ID" value="ABQ29395.1"/>
    <property type="molecule type" value="Genomic_DNA"/>
</dbReference>
<dbReference type="RefSeq" id="WP_011941324.1">
    <property type="nucleotide sequence ID" value="NC_009484.1"/>
</dbReference>
<dbReference type="SMR" id="A5FUW3"/>
<dbReference type="STRING" id="349163.Acry_0167"/>
<dbReference type="KEGG" id="acr:Acry_0167"/>
<dbReference type="eggNOG" id="COG0148">
    <property type="taxonomic scope" value="Bacteria"/>
</dbReference>
<dbReference type="HOGENOM" id="CLU_031223_2_1_5"/>
<dbReference type="UniPathway" id="UPA00109">
    <property type="reaction ID" value="UER00187"/>
</dbReference>
<dbReference type="Proteomes" id="UP000000245">
    <property type="component" value="Chromosome"/>
</dbReference>
<dbReference type="GO" id="GO:0009986">
    <property type="term" value="C:cell surface"/>
    <property type="evidence" value="ECO:0007669"/>
    <property type="project" value="UniProtKB-SubCell"/>
</dbReference>
<dbReference type="GO" id="GO:0005576">
    <property type="term" value="C:extracellular region"/>
    <property type="evidence" value="ECO:0007669"/>
    <property type="project" value="UniProtKB-SubCell"/>
</dbReference>
<dbReference type="GO" id="GO:0000015">
    <property type="term" value="C:phosphopyruvate hydratase complex"/>
    <property type="evidence" value="ECO:0007669"/>
    <property type="project" value="InterPro"/>
</dbReference>
<dbReference type="GO" id="GO:0000287">
    <property type="term" value="F:magnesium ion binding"/>
    <property type="evidence" value="ECO:0007669"/>
    <property type="project" value="UniProtKB-UniRule"/>
</dbReference>
<dbReference type="GO" id="GO:0004634">
    <property type="term" value="F:phosphopyruvate hydratase activity"/>
    <property type="evidence" value="ECO:0007669"/>
    <property type="project" value="UniProtKB-UniRule"/>
</dbReference>
<dbReference type="GO" id="GO:0006096">
    <property type="term" value="P:glycolytic process"/>
    <property type="evidence" value="ECO:0007669"/>
    <property type="project" value="UniProtKB-UniRule"/>
</dbReference>
<dbReference type="CDD" id="cd03313">
    <property type="entry name" value="enolase"/>
    <property type="match status" value="1"/>
</dbReference>
<dbReference type="FunFam" id="3.20.20.120:FF:000001">
    <property type="entry name" value="Enolase"/>
    <property type="match status" value="1"/>
</dbReference>
<dbReference type="FunFam" id="3.30.390.10:FF:000001">
    <property type="entry name" value="Enolase"/>
    <property type="match status" value="1"/>
</dbReference>
<dbReference type="Gene3D" id="3.20.20.120">
    <property type="entry name" value="Enolase-like C-terminal domain"/>
    <property type="match status" value="1"/>
</dbReference>
<dbReference type="Gene3D" id="3.30.390.10">
    <property type="entry name" value="Enolase-like, N-terminal domain"/>
    <property type="match status" value="1"/>
</dbReference>
<dbReference type="HAMAP" id="MF_00318">
    <property type="entry name" value="Enolase"/>
    <property type="match status" value="1"/>
</dbReference>
<dbReference type="InterPro" id="IPR000941">
    <property type="entry name" value="Enolase"/>
</dbReference>
<dbReference type="InterPro" id="IPR036849">
    <property type="entry name" value="Enolase-like_C_sf"/>
</dbReference>
<dbReference type="InterPro" id="IPR029017">
    <property type="entry name" value="Enolase-like_N"/>
</dbReference>
<dbReference type="InterPro" id="IPR020810">
    <property type="entry name" value="Enolase_C"/>
</dbReference>
<dbReference type="InterPro" id="IPR020809">
    <property type="entry name" value="Enolase_CS"/>
</dbReference>
<dbReference type="InterPro" id="IPR020811">
    <property type="entry name" value="Enolase_N"/>
</dbReference>
<dbReference type="NCBIfam" id="TIGR01060">
    <property type="entry name" value="eno"/>
    <property type="match status" value="1"/>
</dbReference>
<dbReference type="PANTHER" id="PTHR11902">
    <property type="entry name" value="ENOLASE"/>
    <property type="match status" value="1"/>
</dbReference>
<dbReference type="PANTHER" id="PTHR11902:SF1">
    <property type="entry name" value="ENOLASE"/>
    <property type="match status" value="1"/>
</dbReference>
<dbReference type="Pfam" id="PF00113">
    <property type="entry name" value="Enolase_C"/>
    <property type="match status" value="1"/>
</dbReference>
<dbReference type="Pfam" id="PF03952">
    <property type="entry name" value="Enolase_N"/>
    <property type="match status" value="1"/>
</dbReference>
<dbReference type="PIRSF" id="PIRSF001400">
    <property type="entry name" value="Enolase"/>
    <property type="match status" value="1"/>
</dbReference>
<dbReference type="PRINTS" id="PR00148">
    <property type="entry name" value="ENOLASE"/>
</dbReference>
<dbReference type="SFLD" id="SFLDF00002">
    <property type="entry name" value="enolase"/>
    <property type="match status" value="1"/>
</dbReference>
<dbReference type="SFLD" id="SFLDG00178">
    <property type="entry name" value="enolase"/>
    <property type="match status" value="1"/>
</dbReference>
<dbReference type="SMART" id="SM01192">
    <property type="entry name" value="Enolase_C"/>
    <property type="match status" value="1"/>
</dbReference>
<dbReference type="SMART" id="SM01193">
    <property type="entry name" value="Enolase_N"/>
    <property type="match status" value="1"/>
</dbReference>
<dbReference type="SUPFAM" id="SSF51604">
    <property type="entry name" value="Enolase C-terminal domain-like"/>
    <property type="match status" value="1"/>
</dbReference>
<dbReference type="SUPFAM" id="SSF54826">
    <property type="entry name" value="Enolase N-terminal domain-like"/>
    <property type="match status" value="1"/>
</dbReference>
<dbReference type="PROSITE" id="PS00164">
    <property type="entry name" value="ENOLASE"/>
    <property type="match status" value="1"/>
</dbReference>
<proteinExistence type="inferred from homology"/>
<protein>
    <recommendedName>
        <fullName evidence="1">Enolase</fullName>
        <ecNumber evidence="1">4.2.1.11</ecNumber>
    </recommendedName>
    <alternativeName>
        <fullName evidence="1">2-phospho-D-glycerate hydro-lyase</fullName>
    </alternativeName>
    <alternativeName>
        <fullName evidence="1">2-phosphoglycerate dehydratase</fullName>
    </alternativeName>
</protein>
<reference key="1">
    <citation type="submission" date="2007-05" db="EMBL/GenBank/DDBJ databases">
        <title>Complete sequence of chromosome of Acidiphilium cryptum JF-5.</title>
        <authorList>
            <consortium name="US DOE Joint Genome Institute"/>
            <person name="Copeland A."/>
            <person name="Lucas S."/>
            <person name="Lapidus A."/>
            <person name="Barry K."/>
            <person name="Detter J.C."/>
            <person name="Glavina del Rio T."/>
            <person name="Hammon N."/>
            <person name="Israni S."/>
            <person name="Dalin E."/>
            <person name="Tice H."/>
            <person name="Pitluck S."/>
            <person name="Sims D."/>
            <person name="Brettin T."/>
            <person name="Bruce D."/>
            <person name="Han C."/>
            <person name="Schmutz J."/>
            <person name="Larimer F."/>
            <person name="Land M."/>
            <person name="Hauser L."/>
            <person name="Kyrpides N."/>
            <person name="Kim E."/>
            <person name="Magnuson T."/>
            <person name="Richardson P."/>
        </authorList>
    </citation>
    <scope>NUCLEOTIDE SEQUENCE [LARGE SCALE GENOMIC DNA]</scope>
    <source>
        <strain>JF-5</strain>
    </source>
</reference>